<organism>
    <name type="scientific">Staphylococcus aureus (strain NCTC 8325 / PS 47)</name>
    <dbReference type="NCBI Taxonomy" id="93061"/>
    <lineage>
        <taxon>Bacteria</taxon>
        <taxon>Bacillati</taxon>
        <taxon>Bacillota</taxon>
        <taxon>Bacilli</taxon>
        <taxon>Bacillales</taxon>
        <taxon>Staphylococcaceae</taxon>
        <taxon>Staphylococcus</taxon>
    </lineage>
</organism>
<protein>
    <recommendedName>
        <fullName>Putative multidrug export ATP-binding/permease protein SAOUHSC_02003</fullName>
        <ecNumber>7.6.2.-</ecNumber>
    </recommendedName>
</protein>
<sequence>MIKRYLQFVKPYKYRIFATIIVGIIKFGIPMLIPLLIKYAIDGVINNHALTTDEKVHHLTIAIGIALFIFVIVRPPIEFIRQYLAQWTSNKILYDIRKKLYNHLQALSARFYANNQVGQVISRVINDVEQTKDFILTGLMNIWLDCITIIIALSIMFFLDVKLTLAALFIFPFYILTVYVFFGRLRKLTRERSQALAEVQGFLHERVQGISVVKSFAIEDNEAKNFDKKNTNFLTRALKHTRWNAYSFAAINTVTDIGPIIVIGVGAYLAISGSITVGTLAAFVGYLELLFGPLRRLVASFTTLTQSFASMDRVFQLIDEDYDIKNGVGAQPIEIKQGRIDIDHVSFQYNDNEAPILKDINLSIEKGETVAFVGMSGGGKSTLINLIPRFYDVTSGQILIDGHNIKDFLTGSLRNQIGLVQQDNILFSDTVKENILLGRPTATDEEVVEAAKMANAHDFIMNLPQGYDTEVGERGVKLSGGQKQRLSIARIFLNNPPILILDEATSALDLESESIIQEALDVLSKDRTTLIVAHRLSTITHADKIVVIENGHIVETGTHRELIAKQGAYEHLYSIQNL</sequence>
<accession>Q2G2M9</accession>
<evidence type="ECO:0000250" key="1"/>
<evidence type="ECO:0000255" key="2"/>
<evidence type="ECO:0000255" key="3">
    <source>
        <dbReference type="PROSITE-ProRule" id="PRU00434"/>
    </source>
</evidence>
<evidence type="ECO:0000255" key="4">
    <source>
        <dbReference type="PROSITE-ProRule" id="PRU00441"/>
    </source>
</evidence>
<evidence type="ECO:0000305" key="5"/>
<proteinExistence type="inferred from homology"/>
<feature type="chain" id="PRO_0000271546" description="Putative multidrug export ATP-binding/permease protein SAOUHSC_02003">
    <location>
        <begin position="1"/>
        <end position="578"/>
    </location>
</feature>
<feature type="topological domain" description="Cytoplasmic" evidence="2">
    <location>
        <begin position="1"/>
        <end position="15"/>
    </location>
</feature>
<feature type="transmembrane region" description="Helical" evidence="4">
    <location>
        <begin position="16"/>
        <end position="36"/>
    </location>
</feature>
<feature type="topological domain" description="Extracellular" evidence="2">
    <location>
        <begin position="37"/>
        <end position="59"/>
    </location>
</feature>
<feature type="transmembrane region" description="Helical" evidence="4">
    <location>
        <begin position="60"/>
        <end position="80"/>
    </location>
</feature>
<feature type="topological domain" description="Cytoplasmic" evidence="2">
    <location>
        <begin position="81"/>
        <end position="138"/>
    </location>
</feature>
<feature type="transmembrane region" description="Helical" evidence="4">
    <location>
        <begin position="139"/>
        <end position="159"/>
    </location>
</feature>
<feature type="topological domain" description="Extracellular" evidence="2">
    <location>
        <begin position="160"/>
        <end position="162"/>
    </location>
</feature>
<feature type="transmembrane region" description="Helical" evidence="4">
    <location>
        <begin position="163"/>
        <end position="183"/>
    </location>
</feature>
<feature type="topological domain" description="Cytoplasmic" evidence="2">
    <location>
        <begin position="184"/>
        <end position="244"/>
    </location>
</feature>
<feature type="transmembrane region" description="Helical" evidence="4">
    <location>
        <begin position="245"/>
        <end position="263"/>
    </location>
</feature>
<feature type="topological domain" description="Extracellular" evidence="2">
    <location>
        <begin position="264"/>
        <end position="269"/>
    </location>
</feature>
<feature type="transmembrane region" description="Helical" evidence="4">
    <location>
        <begin position="270"/>
        <end position="287"/>
    </location>
</feature>
<feature type="topological domain" description="Cytoplasmic" evidence="2">
    <location>
        <begin position="288"/>
        <end position="578"/>
    </location>
</feature>
<feature type="domain" description="ABC transmembrane type-1" evidence="4">
    <location>
        <begin position="16"/>
        <end position="306"/>
    </location>
</feature>
<feature type="domain" description="ABC transporter" evidence="3">
    <location>
        <begin position="340"/>
        <end position="575"/>
    </location>
</feature>
<feature type="binding site" evidence="3">
    <location>
        <begin position="374"/>
        <end position="381"/>
    </location>
    <ligand>
        <name>ATP</name>
        <dbReference type="ChEBI" id="CHEBI:30616"/>
    </ligand>
</feature>
<keyword id="KW-0067">ATP-binding</keyword>
<keyword id="KW-1003">Cell membrane</keyword>
<keyword id="KW-0472">Membrane</keyword>
<keyword id="KW-0547">Nucleotide-binding</keyword>
<keyword id="KW-1185">Reference proteome</keyword>
<keyword id="KW-1278">Translocase</keyword>
<keyword id="KW-0812">Transmembrane</keyword>
<keyword id="KW-1133">Transmembrane helix</keyword>
<keyword id="KW-0813">Transport</keyword>
<comment type="function">
    <text evidence="1">May be involved in multidrug export. Transmembrane domains (TMD) form a pore in the cell membrane and the ATP-binding domain (NBD) is responsible for energy generation (By similarity).</text>
</comment>
<comment type="subunit">
    <text evidence="1">Homodimer.</text>
</comment>
<comment type="subcellular location">
    <subcellularLocation>
        <location evidence="1">Cell membrane</location>
        <topology evidence="4">Multi-pass membrane protein</topology>
    </subcellularLocation>
</comment>
<comment type="domain">
    <text>The ATP-binding domain (NBD) and the transmembrane domain (TMD) are fused.</text>
</comment>
<comment type="similarity">
    <text evidence="5">Belongs to the ABC transporter superfamily.</text>
</comment>
<reference key="1">
    <citation type="book" date="2006" name="Gram positive pathogens, 2nd edition">
        <title>The Staphylococcus aureus NCTC 8325 genome.</title>
        <editorList>
            <person name="Fischetti V."/>
            <person name="Novick R."/>
            <person name="Ferretti J."/>
            <person name="Portnoy D."/>
            <person name="Rood J."/>
        </editorList>
        <authorList>
            <person name="Gillaspy A.F."/>
            <person name="Worrell V."/>
            <person name="Orvis J."/>
            <person name="Roe B.A."/>
            <person name="Dyer D.W."/>
            <person name="Iandolo J.J."/>
        </authorList>
    </citation>
    <scope>NUCLEOTIDE SEQUENCE [LARGE SCALE GENOMIC DNA]</scope>
    <source>
        <strain>NCTC 8325 / PS 47</strain>
    </source>
</reference>
<name>Y2003_STAA8</name>
<dbReference type="EC" id="7.6.2.-"/>
<dbReference type="EMBL" id="CP000253">
    <property type="protein sequence ID" value="ABD31059.1"/>
    <property type="molecule type" value="Genomic_DNA"/>
</dbReference>
<dbReference type="RefSeq" id="WP_000597238.1">
    <property type="nucleotide sequence ID" value="NZ_LS483365.1"/>
</dbReference>
<dbReference type="RefSeq" id="YP_500500.1">
    <property type="nucleotide sequence ID" value="NC_007795.1"/>
</dbReference>
<dbReference type="SMR" id="Q2G2M9"/>
<dbReference type="STRING" id="93061.SAOUHSC_02003"/>
<dbReference type="TCDB" id="3.A.1.106.2">
    <property type="family name" value="the atp-binding cassette (abc) superfamily"/>
</dbReference>
<dbReference type="PaxDb" id="1280-SAXN108_1896"/>
<dbReference type="GeneID" id="3921883"/>
<dbReference type="KEGG" id="sao:SAOUHSC_02003"/>
<dbReference type="PATRIC" id="fig|93061.5.peg.1819"/>
<dbReference type="eggNOG" id="COG1132">
    <property type="taxonomic scope" value="Bacteria"/>
</dbReference>
<dbReference type="HOGENOM" id="CLU_000604_84_3_9"/>
<dbReference type="OrthoDB" id="9770415at2"/>
<dbReference type="PRO" id="PR:Q2G2M9"/>
<dbReference type="Proteomes" id="UP000008816">
    <property type="component" value="Chromosome"/>
</dbReference>
<dbReference type="GO" id="GO:0005886">
    <property type="term" value="C:plasma membrane"/>
    <property type="evidence" value="ECO:0007669"/>
    <property type="project" value="UniProtKB-SubCell"/>
</dbReference>
<dbReference type="GO" id="GO:0140359">
    <property type="term" value="F:ABC-type transporter activity"/>
    <property type="evidence" value="ECO:0007669"/>
    <property type="project" value="InterPro"/>
</dbReference>
<dbReference type="GO" id="GO:0005524">
    <property type="term" value="F:ATP binding"/>
    <property type="evidence" value="ECO:0007669"/>
    <property type="project" value="UniProtKB-KW"/>
</dbReference>
<dbReference type="GO" id="GO:0016887">
    <property type="term" value="F:ATP hydrolysis activity"/>
    <property type="evidence" value="ECO:0007669"/>
    <property type="project" value="InterPro"/>
</dbReference>
<dbReference type="GO" id="GO:0042626">
    <property type="term" value="F:ATPase-coupled transmembrane transporter activity"/>
    <property type="evidence" value="ECO:0000318"/>
    <property type="project" value="GO_Central"/>
</dbReference>
<dbReference type="GO" id="GO:0055085">
    <property type="term" value="P:transmembrane transport"/>
    <property type="evidence" value="ECO:0000318"/>
    <property type="project" value="GO_Central"/>
</dbReference>
<dbReference type="CDD" id="cd18554">
    <property type="entry name" value="ABC_6TM_Sav1866_like"/>
    <property type="match status" value="1"/>
</dbReference>
<dbReference type="CDD" id="cd03251">
    <property type="entry name" value="ABCC_MsbA"/>
    <property type="match status" value="1"/>
</dbReference>
<dbReference type="FunFam" id="1.20.1560.10:FF:000069">
    <property type="entry name" value="Multidrug ABC transporter ATP-binding protein"/>
    <property type="match status" value="1"/>
</dbReference>
<dbReference type="FunFam" id="3.40.50.300:FF:000218">
    <property type="entry name" value="Multidrug ABC transporter ATP-binding protein"/>
    <property type="match status" value="1"/>
</dbReference>
<dbReference type="Gene3D" id="1.20.1560.10">
    <property type="entry name" value="ABC transporter type 1, transmembrane domain"/>
    <property type="match status" value="1"/>
</dbReference>
<dbReference type="Gene3D" id="3.40.50.300">
    <property type="entry name" value="P-loop containing nucleotide triphosphate hydrolases"/>
    <property type="match status" value="1"/>
</dbReference>
<dbReference type="InterPro" id="IPR003593">
    <property type="entry name" value="AAA+_ATPase"/>
</dbReference>
<dbReference type="InterPro" id="IPR011527">
    <property type="entry name" value="ABC1_TM_dom"/>
</dbReference>
<dbReference type="InterPro" id="IPR036640">
    <property type="entry name" value="ABC1_TM_sf"/>
</dbReference>
<dbReference type="InterPro" id="IPR003439">
    <property type="entry name" value="ABC_transporter-like_ATP-bd"/>
</dbReference>
<dbReference type="InterPro" id="IPR017871">
    <property type="entry name" value="ABC_transporter-like_CS"/>
</dbReference>
<dbReference type="InterPro" id="IPR027417">
    <property type="entry name" value="P-loop_NTPase"/>
</dbReference>
<dbReference type="InterPro" id="IPR039421">
    <property type="entry name" value="Type_1_exporter"/>
</dbReference>
<dbReference type="PANTHER" id="PTHR43394:SF1">
    <property type="entry name" value="ATP-BINDING CASSETTE SUB-FAMILY B MEMBER 10, MITOCHONDRIAL"/>
    <property type="match status" value="1"/>
</dbReference>
<dbReference type="PANTHER" id="PTHR43394">
    <property type="entry name" value="ATP-DEPENDENT PERMEASE MDL1, MITOCHONDRIAL"/>
    <property type="match status" value="1"/>
</dbReference>
<dbReference type="Pfam" id="PF00664">
    <property type="entry name" value="ABC_membrane"/>
    <property type="match status" value="1"/>
</dbReference>
<dbReference type="Pfam" id="PF00005">
    <property type="entry name" value="ABC_tran"/>
    <property type="match status" value="1"/>
</dbReference>
<dbReference type="SMART" id="SM00382">
    <property type="entry name" value="AAA"/>
    <property type="match status" value="1"/>
</dbReference>
<dbReference type="SUPFAM" id="SSF90123">
    <property type="entry name" value="ABC transporter transmembrane region"/>
    <property type="match status" value="1"/>
</dbReference>
<dbReference type="SUPFAM" id="SSF52540">
    <property type="entry name" value="P-loop containing nucleoside triphosphate hydrolases"/>
    <property type="match status" value="1"/>
</dbReference>
<dbReference type="PROSITE" id="PS50929">
    <property type="entry name" value="ABC_TM1F"/>
    <property type="match status" value="1"/>
</dbReference>
<dbReference type="PROSITE" id="PS00211">
    <property type="entry name" value="ABC_TRANSPORTER_1"/>
    <property type="match status" value="1"/>
</dbReference>
<dbReference type="PROSITE" id="PS50893">
    <property type="entry name" value="ABC_TRANSPORTER_2"/>
    <property type="match status" value="1"/>
</dbReference>
<gene>
    <name type="ordered locus">SAOUHSC_02003</name>
</gene>